<feature type="chain" id="PRO_1000198920" description="Arginine--tRNA ligase">
    <location>
        <begin position="1"/>
        <end position="585"/>
    </location>
</feature>
<feature type="short sequence motif" description="'HIGH' region">
    <location>
        <begin position="130"/>
        <end position="140"/>
    </location>
</feature>
<name>SYR_METEP</name>
<keyword id="KW-0030">Aminoacyl-tRNA synthetase</keyword>
<keyword id="KW-0067">ATP-binding</keyword>
<keyword id="KW-0963">Cytoplasm</keyword>
<keyword id="KW-0436">Ligase</keyword>
<keyword id="KW-0547">Nucleotide-binding</keyword>
<keyword id="KW-0648">Protein biosynthesis</keyword>
<dbReference type="EC" id="6.1.1.19" evidence="1"/>
<dbReference type="EMBL" id="CP000908">
    <property type="protein sequence ID" value="ABY31782.1"/>
    <property type="molecule type" value="Genomic_DNA"/>
</dbReference>
<dbReference type="RefSeq" id="WP_012254649.1">
    <property type="nucleotide sequence ID" value="NC_010172.1"/>
</dbReference>
<dbReference type="SMR" id="A9W7L3"/>
<dbReference type="KEGG" id="mex:Mext_3396"/>
<dbReference type="eggNOG" id="COG0018">
    <property type="taxonomic scope" value="Bacteria"/>
</dbReference>
<dbReference type="HOGENOM" id="CLU_006406_0_1_5"/>
<dbReference type="BioCyc" id="MEXT419610:MEXT_RS17050-MONOMER"/>
<dbReference type="GO" id="GO:0005737">
    <property type="term" value="C:cytoplasm"/>
    <property type="evidence" value="ECO:0007669"/>
    <property type="project" value="UniProtKB-SubCell"/>
</dbReference>
<dbReference type="GO" id="GO:0004814">
    <property type="term" value="F:arginine-tRNA ligase activity"/>
    <property type="evidence" value="ECO:0007669"/>
    <property type="project" value="UniProtKB-UniRule"/>
</dbReference>
<dbReference type="GO" id="GO:0005524">
    <property type="term" value="F:ATP binding"/>
    <property type="evidence" value="ECO:0007669"/>
    <property type="project" value="UniProtKB-UniRule"/>
</dbReference>
<dbReference type="GO" id="GO:0006420">
    <property type="term" value="P:arginyl-tRNA aminoacylation"/>
    <property type="evidence" value="ECO:0007669"/>
    <property type="project" value="UniProtKB-UniRule"/>
</dbReference>
<dbReference type="CDD" id="cd00671">
    <property type="entry name" value="ArgRS_core"/>
    <property type="match status" value="1"/>
</dbReference>
<dbReference type="FunFam" id="1.10.730.10:FF:000008">
    <property type="entry name" value="Arginine--tRNA ligase"/>
    <property type="match status" value="1"/>
</dbReference>
<dbReference type="FunFam" id="3.40.50.620:FF:000062">
    <property type="entry name" value="Arginine--tRNA ligase"/>
    <property type="match status" value="1"/>
</dbReference>
<dbReference type="Gene3D" id="3.30.1360.70">
    <property type="entry name" value="Arginyl tRNA synthetase N-terminal domain"/>
    <property type="match status" value="1"/>
</dbReference>
<dbReference type="Gene3D" id="3.40.50.620">
    <property type="entry name" value="HUPs"/>
    <property type="match status" value="1"/>
</dbReference>
<dbReference type="Gene3D" id="1.10.730.10">
    <property type="entry name" value="Isoleucyl-tRNA Synthetase, Domain 1"/>
    <property type="match status" value="1"/>
</dbReference>
<dbReference type="HAMAP" id="MF_00123">
    <property type="entry name" value="Arg_tRNA_synth"/>
    <property type="match status" value="1"/>
</dbReference>
<dbReference type="InterPro" id="IPR001412">
    <property type="entry name" value="aa-tRNA-synth_I_CS"/>
</dbReference>
<dbReference type="InterPro" id="IPR001278">
    <property type="entry name" value="Arg-tRNA-ligase"/>
</dbReference>
<dbReference type="InterPro" id="IPR005148">
    <property type="entry name" value="Arg-tRNA-synth_N"/>
</dbReference>
<dbReference type="InterPro" id="IPR036695">
    <property type="entry name" value="Arg-tRNA-synth_N_sf"/>
</dbReference>
<dbReference type="InterPro" id="IPR035684">
    <property type="entry name" value="ArgRS_core"/>
</dbReference>
<dbReference type="InterPro" id="IPR008909">
    <property type="entry name" value="DALR_anticod-bd"/>
</dbReference>
<dbReference type="InterPro" id="IPR014729">
    <property type="entry name" value="Rossmann-like_a/b/a_fold"/>
</dbReference>
<dbReference type="InterPro" id="IPR009080">
    <property type="entry name" value="tRNAsynth_Ia_anticodon-bd"/>
</dbReference>
<dbReference type="NCBIfam" id="TIGR00456">
    <property type="entry name" value="argS"/>
    <property type="match status" value="1"/>
</dbReference>
<dbReference type="PANTHER" id="PTHR11956:SF5">
    <property type="entry name" value="ARGININE--TRNA LIGASE, CYTOPLASMIC"/>
    <property type="match status" value="1"/>
</dbReference>
<dbReference type="PANTHER" id="PTHR11956">
    <property type="entry name" value="ARGINYL-TRNA SYNTHETASE"/>
    <property type="match status" value="1"/>
</dbReference>
<dbReference type="Pfam" id="PF03485">
    <property type="entry name" value="Arg_tRNA_synt_N"/>
    <property type="match status" value="1"/>
</dbReference>
<dbReference type="Pfam" id="PF05746">
    <property type="entry name" value="DALR_1"/>
    <property type="match status" value="1"/>
</dbReference>
<dbReference type="Pfam" id="PF00750">
    <property type="entry name" value="tRNA-synt_1d"/>
    <property type="match status" value="2"/>
</dbReference>
<dbReference type="PRINTS" id="PR01038">
    <property type="entry name" value="TRNASYNTHARG"/>
</dbReference>
<dbReference type="SMART" id="SM01016">
    <property type="entry name" value="Arg_tRNA_synt_N"/>
    <property type="match status" value="1"/>
</dbReference>
<dbReference type="SMART" id="SM00836">
    <property type="entry name" value="DALR_1"/>
    <property type="match status" value="1"/>
</dbReference>
<dbReference type="SUPFAM" id="SSF47323">
    <property type="entry name" value="Anticodon-binding domain of a subclass of class I aminoacyl-tRNA synthetases"/>
    <property type="match status" value="1"/>
</dbReference>
<dbReference type="SUPFAM" id="SSF55190">
    <property type="entry name" value="Arginyl-tRNA synthetase (ArgRS), N-terminal 'additional' domain"/>
    <property type="match status" value="1"/>
</dbReference>
<dbReference type="SUPFAM" id="SSF52374">
    <property type="entry name" value="Nucleotidylyl transferase"/>
    <property type="match status" value="1"/>
</dbReference>
<dbReference type="PROSITE" id="PS00178">
    <property type="entry name" value="AA_TRNA_LIGASE_I"/>
    <property type="match status" value="1"/>
</dbReference>
<proteinExistence type="inferred from homology"/>
<gene>
    <name evidence="1" type="primary">argS</name>
    <name type="ordered locus">Mext_3396</name>
</gene>
<protein>
    <recommendedName>
        <fullName evidence="1">Arginine--tRNA ligase</fullName>
        <ecNumber evidence="1">6.1.1.19</ecNumber>
    </recommendedName>
    <alternativeName>
        <fullName evidence="1">Arginyl-tRNA synthetase</fullName>
        <shortName evidence="1">ArgRS</shortName>
    </alternativeName>
</protein>
<reference key="1">
    <citation type="submission" date="2007-12" db="EMBL/GenBank/DDBJ databases">
        <title>Complete sequence of Methylobacterium extorquens PA1.</title>
        <authorList>
            <consortium name="US DOE Joint Genome Institute"/>
            <person name="Copeland A."/>
            <person name="Lucas S."/>
            <person name="Lapidus A."/>
            <person name="Barry K."/>
            <person name="Glavina del Rio T."/>
            <person name="Dalin E."/>
            <person name="Tice H."/>
            <person name="Pitluck S."/>
            <person name="Saunders E."/>
            <person name="Brettin T."/>
            <person name="Bruce D."/>
            <person name="Detter J.C."/>
            <person name="Han C."/>
            <person name="Schmutz J."/>
            <person name="Larimer F."/>
            <person name="Land M."/>
            <person name="Hauser L."/>
            <person name="Kyrpides N."/>
            <person name="Kim E."/>
            <person name="Marx C."/>
            <person name="Richardson P."/>
        </authorList>
    </citation>
    <scope>NUCLEOTIDE SEQUENCE [LARGE SCALE GENOMIC DNA]</scope>
    <source>
        <strain>PA1</strain>
    </source>
</reference>
<sequence length="585" mass="64402">MNIFALFETRVREALESLTRSGRLPEGLDLSRVVVEPPRDASHGDLATNAALVLAKEAKQNPKALGEALAEELRTDPRIVEASVAGPGFINLRLAPEVFQDVIRAALSEGENFGRGQMPGGPVNIEYVSANPTGPMHVGHGRGAVFGDALANLLAAAGRPVTREYYINDAGAQVDVLARSAYLRYREALGETITIPEGLYPGDYLKPVGMRLAETHGRTLLDQPEHEWLPQVRRFAIDAMMAMIREDLAAIGIRHDVFFSEATLQGENGGKVAELLDALRQKGLVYEGRLPPPKGQLPDDWEDREQTLFRSSQFGDDVDRALLKSDGSFTYFASDIAYHRDKWLRGANELIDVLGADHGGYVKRMQAAVKAVSDGQARLDVKLCQLVRLLRAGEPVKMSKRAGEFVTLRDVIDEVGRDAIRFMMLYRKNDATLDFDLAKVVEQSKDNPVFYVQYGHARRFSVLRQAREALPGEDFSPAALLADADLSVLTDPGEIEMMRLIAQYPRVLESAAAAHEPHRIAFYLYETASSLHSFWNKGKDLPQLRIVNPTDRNSTRARLALVEALGGVLASGLAVLGVSAPNEMR</sequence>
<evidence type="ECO:0000255" key="1">
    <source>
        <dbReference type="HAMAP-Rule" id="MF_00123"/>
    </source>
</evidence>
<accession>A9W7L3</accession>
<organism>
    <name type="scientific">Methylorubrum extorquens (strain PA1)</name>
    <name type="common">Methylobacterium extorquens</name>
    <dbReference type="NCBI Taxonomy" id="419610"/>
    <lineage>
        <taxon>Bacteria</taxon>
        <taxon>Pseudomonadati</taxon>
        <taxon>Pseudomonadota</taxon>
        <taxon>Alphaproteobacteria</taxon>
        <taxon>Hyphomicrobiales</taxon>
        <taxon>Methylobacteriaceae</taxon>
        <taxon>Methylorubrum</taxon>
    </lineage>
</organism>
<comment type="catalytic activity">
    <reaction evidence="1">
        <text>tRNA(Arg) + L-arginine + ATP = L-arginyl-tRNA(Arg) + AMP + diphosphate</text>
        <dbReference type="Rhea" id="RHEA:20301"/>
        <dbReference type="Rhea" id="RHEA-COMP:9658"/>
        <dbReference type="Rhea" id="RHEA-COMP:9673"/>
        <dbReference type="ChEBI" id="CHEBI:30616"/>
        <dbReference type="ChEBI" id="CHEBI:32682"/>
        <dbReference type="ChEBI" id="CHEBI:33019"/>
        <dbReference type="ChEBI" id="CHEBI:78442"/>
        <dbReference type="ChEBI" id="CHEBI:78513"/>
        <dbReference type="ChEBI" id="CHEBI:456215"/>
        <dbReference type="EC" id="6.1.1.19"/>
    </reaction>
</comment>
<comment type="subunit">
    <text evidence="1">Monomer.</text>
</comment>
<comment type="subcellular location">
    <subcellularLocation>
        <location evidence="1">Cytoplasm</location>
    </subcellularLocation>
</comment>
<comment type="similarity">
    <text evidence="1">Belongs to the class-I aminoacyl-tRNA synthetase family.</text>
</comment>